<feature type="chain" id="PRO_0000089099" description="Actin-related protein 4">
    <location>
        <begin position="1"/>
        <end position="469"/>
    </location>
</feature>
<feature type="region of interest" description="Disordered" evidence="2">
    <location>
        <begin position="104"/>
        <end position="136"/>
    </location>
</feature>
<feature type="compositionally biased region" description="Acidic residues" evidence="2">
    <location>
        <begin position="119"/>
        <end position="136"/>
    </location>
</feature>
<reference key="1">
    <citation type="journal article" date="2003" name="Nature">
        <title>The genome sequence of the filamentous fungus Neurospora crassa.</title>
        <authorList>
            <person name="Galagan J.E."/>
            <person name="Calvo S.E."/>
            <person name="Borkovich K.A."/>
            <person name="Selker E.U."/>
            <person name="Read N.D."/>
            <person name="Jaffe D.B."/>
            <person name="FitzHugh W."/>
            <person name="Ma L.-J."/>
            <person name="Smirnov S."/>
            <person name="Purcell S."/>
            <person name="Rehman B."/>
            <person name="Elkins T."/>
            <person name="Engels R."/>
            <person name="Wang S."/>
            <person name="Nielsen C.B."/>
            <person name="Butler J."/>
            <person name="Endrizzi M."/>
            <person name="Qui D."/>
            <person name="Ianakiev P."/>
            <person name="Bell-Pedersen D."/>
            <person name="Nelson M.A."/>
            <person name="Werner-Washburne M."/>
            <person name="Selitrennikoff C.P."/>
            <person name="Kinsey J.A."/>
            <person name="Braun E.L."/>
            <person name="Zelter A."/>
            <person name="Schulte U."/>
            <person name="Kothe G.O."/>
            <person name="Jedd G."/>
            <person name="Mewes H.-W."/>
            <person name="Staben C."/>
            <person name="Marcotte E."/>
            <person name="Greenberg D."/>
            <person name="Roy A."/>
            <person name="Foley K."/>
            <person name="Naylor J."/>
            <person name="Stange-Thomann N."/>
            <person name="Barrett R."/>
            <person name="Gnerre S."/>
            <person name="Kamal M."/>
            <person name="Kamvysselis M."/>
            <person name="Mauceli E.W."/>
            <person name="Bielke C."/>
            <person name="Rudd S."/>
            <person name="Frishman D."/>
            <person name="Krystofova S."/>
            <person name="Rasmussen C."/>
            <person name="Metzenberg R.L."/>
            <person name="Perkins D.D."/>
            <person name="Kroken S."/>
            <person name="Cogoni C."/>
            <person name="Macino G."/>
            <person name="Catcheside D.E.A."/>
            <person name="Li W."/>
            <person name="Pratt R.J."/>
            <person name="Osmani S.A."/>
            <person name="DeSouza C.P.C."/>
            <person name="Glass N.L."/>
            <person name="Orbach M.J."/>
            <person name="Berglund J.A."/>
            <person name="Voelker R."/>
            <person name="Yarden O."/>
            <person name="Plamann M."/>
            <person name="Seiler S."/>
            <person name="Dunlap J.C."/>
            <person name="Radford A."/>
            <person name="Aramayo R."/>
            <person name="Natvig D.O."/>
            <person name="Alex L.A."/>
            <person name="Mannhaupt G."/>
            <person name="Ebbole D.J."/>
            <person name="Freitag M."/>
            <person name="Paulsen I."/>
            <person name="Sachs M.S."/>
            <person name="Lander E.S."/>
            <person name="Nusbaum C."/>
            <person name="Birren B.W."/>
        </authorList>
    </citation>
    <scope>NUCLEOTIDE SEQUENCE [LARGE SCALE GENOMIC DNA]</scope>
    <source>
        <strain>ATCC 24698 / 74-OR23-1A / CBS 708.71 / DSM 1257 / FGSC 987</strain>
    </source>
</reference>
<gene>
    <name type="primary">arp-4</name>
    <name type="ORF">NCU02555</name>
</gene>
<accession>Q7SHR0</accession>
<protein>
    <recommendedName>
        <fullName>Actin-related protein 4</fullName>
    </recommendedName>
    <alternativeName>
        <fullName>Actin-like protein 4</fullName>
    </alternativeName>
</protein>
<name>ARP4_NEUCR</name>
<proteinExistence type="inferred from homology"/>
<organism>
    <name type="scientific">Neurospora crassa (strain ATCC 24698 / 74-OR23-1A / CBS 708.71 / DSM 1257 / FGSC 987)</name>
    <dbReference type="NCBI Taxonomy" id="367110"/>
    <lineage>
        <taxon>Eukaryota</taxon>
        <taxon>Fungi</taxon>
        <taxon>Dikarya</taxon>
        <taxon>Ascomycota</taxon>
        <taxon>Pezizomycotina</taxon>
        <taxon>Sordariomycetes</taxon>
        <taxon>Sordariomycetidae</taxon>
        <taxon>Sordariales</taxon>
        <taxon>Sordariaceae</taxon>
        <taxon>Neurospora</taxon>
    </lineage>
</organism>
<evidence type="ECO:0000250" key="1"/>
<evidence type="ECO:0000256" key="2">
    <source>
        <dbReference type="SAM" id="MobiDB-lite"/>
    </source>
</evidence>
<evidence type="ECO:0000305" key="3"/>
<keyword id="KW-0010">Activator</keyword>
<keyword id="KW-0156">Chromatin regulator</keyword>
<keyword id="KW-0227">DNA damage</keyword>
<keyword id="KW-0234">DNA repair</keyword>
<keyword id="KW-0539">Nucleus</keyword>
<keyword id="KW-1185">Reference proteome</keyword>
<keyword id="KW-0804">Transcription</keyword>
<keyword id="KW-0805">Transcription regulation</keyword>
<dbReference type="EMBL" id="CM002236">
    <property type="protein sequence ID" value="EAA36450.2"/>
    <property type="molecule type" value="Genomic_DNA"/>
</dbReference>
<dbReference type="RefSeq" id="XP_965686.2">
    <property type="nucleotide sequence ID" value="XM_960593.3"/>
</dbReference>
<dbReference type="SMR" id="Q7SHR0"/>
<dbReference type="FunCoup" id="Q7SHR0">
    <property type="interactions" value="268"/>
</dbReference>
<dbReference type="STRING" id="367110.Q7SHR0"/>
<dbReference type="PaxDb" id="5141-EFNCRP00000002099"/>
<dbReference type="EnsemblFungi" id="EAA36450">
    <property type="protein sequence ID" value="EAA36450"/>
    <property type="gene ID" value="NCU02555"/>
</dbReference>
<dbReference type="GeneID" id="3881836"/>
<dbReference type="KEGG" id="ncr:NCU02555"/>
<dbReference type="VEuPathDB" id="FungiDB:NCU02555"/>
<dbReference type="HOGENOM" id="CLU_027965_6_2_1"/>
<dbReference type="InParanoid" id="Q7SHR0"/>
<dbReference type="OrthoDB" id="5132116at2759"/>
<dbReference type="Proteomes" id="UP000001805">
    <property type="component" value="Chromosome 1, Linkage Group I"/>
</dbReference>
<dbReference type="GO" id="GO:0035267">
    <property type="term" value="C:NuA4 histone acetyltransferase complex"/>
    <property type="evidence" value="ECO:0000318"/>
    <property type="project" value="GO_Central"/>
</dbReference>
<dbReference type="GO" id="GO:0016514">
    <property type="term" value="C:SWI/SNF complex"/>
    <property type="evidence" value="ECO:0000318"/>
    <property type="project" value="GO_Central"/>
</dbReference>
<dbReference type="GO" id="GO:0003682">
    <property type="term" value="F:chromatin binding"/>
    <property type="evidence" value="ECO:0000318"/>
    <property type="project" value="GO_Central"/>
</dbReference>
<dbReference type="GO" id="GO:0006338">
    <property type="term" value="P:chromatin remodeling"/>
    <property type="evidence" value="ECO:0000318"/>
    <property type="project" value="GO_Central"/>
</dbReference>
<dbReference type="GO" id="GO:0006281">
    <property type="term" value="P:DNA repair"/>
    <property type="evidence" value="ECO:0007669"/>
    <property type="project" value="UniProtKB-KW"/>
</dbReference>
<dbReference type="GO" id="GO:0006357">
    <property type="term" value="P:regulation of transcription by RNA polymerase II"/>
    <property type="evidence" value="ECO:0000318"/>
    <property type="project" value="GO_Central"/>
</dbReference>
<dbReference type="CDD" id="cd13395">
    <property type="entry name" value="ASKHA_NBD_Arp4_ACTL6-like"/>
    <property type="match status" value="1"/>
</dbReference>
<dbReference type="FunFam" id="3.30.420.40:FF:000137">
    <property type="entry name" value="Actin-related protein 4"/>
    <property type="match status" value="1"/>
</dbReference>
<dbReference type="FunFam" id="3.30.420.40:FF:000224">
    <property type="entry name" value="NuA4 histone acetyltransferase subunit"/>
    <property type="match status" value="1"/>
</dbReference>
<dbReference type="FunFam" id="3.90.640.10:FF:000122">
    <property type="entry name" value="WGS project CABT00000000 data, contig 2.6"/>
    <property type="match status" value="1"/>
</dbReference>
<dbReference type="Gene3D" id="3.30.420.40">
    <property type="match status" value="3"/>
</dbReference>
<dbReference type="Gene3D" id="3.90.640.10">
    <property type="entry name" value="Actin, Chain A, domain 4"/>
    <property type="match status" value="1"/>
</dbReference>
<dbReference type="InterPro" id="IPR004000">
    <property type="entry name" value="Actin"/>
</dbReference>
<dbReference type="InterPro" id="IPR004001">
    <property type="entry name" value="Actin_CS"/>
</dbReference>
<dbReference type="InterPro" id="IPR043129">
    <property type="entry name" value="ATPase_NBD"/>
</dbReference>
<dbReference type="PANTHER" id="PTHR11937">
    <property type="entry name" value="ACTIN"/>
    <property type="match status" value="1"/>
</dbReference>
<dbReference type="Pfam" id="PF00022">
    <property type="entry name" value="Actin"/>
    <property type="match status" value="1"/>
</dbReference>
<dbReference type="SMART" id="SM00268">
    <property type="entry name" value="ACTIN"/>
    <property type="match status" value="1"/>
</dbReference>
<dbReference type="SUPFAM" id="SSF53067">
    <property type="entry name" value="Actin-like ATPase domain"/>
    <property type="match status" value="2"/>
</dbReference>
<dbReference type="PROSITE" id="PS00432">
    <property type="entry name" value="ACTINS_2"/>
    <property type="match status" value="1"/>
</dbReference>
<sequence length="469" mass="51986">MSHQQPLSSSVQPTDIYGGDEVSALVLDPGYCNTRAGYAGEEMPKQVLPSFYGHINGRDVFGDEYIVPKPGFEVRNYMNRDSVVEDWDAATRMWEHVLVKRLQPERSTPPSKKGINISDDGDVPMEDDGNNNEDATDALEKPLAENPLLMTEAPWNSPKAREKAIEISMETWGVPAFWLSKTPVLAAFAAGKATALVIDVGGANTSVTAIHDGMVLKRSIQRSPVGGVWLSSQICKMWDGSEPKVDVVPRFMVESKKPVEAGAPAEANLRKFNFDIHPSFRAYEEERVLTEFKESVVEVWRGPQRFTTPGNEDAVRTQPGRVFEMPDGSNQMWREQRFKVSEGMWDETAAYNSTDEEGRVTKAQTIPALIKAALEGVDVDLRPNILGNVVVTGSTSLLNGFNDRLNHELAQMYPGVKIKIHAAGLTTERRFGAWIGGSILASLGTFHQMWISRKEYDENGAGIVEKRCK</sequence>
<comment type="function">
    <text evidence="1">Chromatin interaction component of the NuA4 histone acetyltransferase complex which is involved in transcriptional activation of selected genes principally by acetylation of nucleosomal histone H4 and H2A. The NuA4 complex is also involved in DNA repair. Is required for NuA4 complex integrity. Component of the SWR1 complex which mediates the ATP-dependent exchange of histone H2A for the H2A variant H2A.Z leading to transcriptional regulation of selected genes by chromatin remodeling. Component of the INO80 complex which remodels chromatin by shifting nucleosomes and is involved in DNA repair (By similarity).</text>
</comment>
<comment type="subunit">
    <text evidence="1">Component of the NuA4 histone acetyltransferase complex, of the INO80 chromatin remodeling complex, and of the SWR1 chromatin remodeling complex.</text>
</comment>
<comment type="subcellular location">
    <subcellularLocation>
        <location evidence="1">Nucleus</location>
    </subcellularLocation>
</comment>
<comment type="similarity">
    <text evidence="3">Belongs to the actin family. ARP4 subfamily.</text>
</comment>